<gene>
    <name evidence="1" type="primary">rpsS</name>
    <name type="ordered locus">PMI3259</name>
</gene>
<reference key="1">
    <citation type="journal article" date="2008" name="J. Bacteriol.">
        <title>Complete genome sequence of uropathogenic Proteus mirabilis, a master of both adherence and motility.</title>
        <authorList>
            <person name="Pearson M.M."/>
            <person name="Sebaihia M."/>
            <person name="Churcher C."/>
            <person name="Quail M.A."/>
            <person name="Seshasayee A.S."/>
            <person name="Luscombe N.M."/>
            <person name="Abdellah Z."/>
            <person name="Arrosmith C."/>
            <person name="Atkin B."/>
            <person name="Chillingworth T."/>
            <person name="Hauser H."/>
            <person name="Jagels K."/>
            <person name="Moule S."/>
            <person name="Mungall K."/>
            <person name="Norbertczak H."/>
            <person name="Rabbinowitsch E."/>
            <person name="Walker D."/>
            <person name="Whithead S."/>
            <person name="Thomson N.R."/>
            <person name="Rather P.N."/>
            <person name="Parkhill J."/>
            <person name="Mobley H.L.T."/>
        </authorList>
    </citation>
    <scope>NUCLEOTIDE SEQUENCE [LARGE SCALE GENOMIC DNA]</scope>
    <source>
        <strain>HI4320</strain>
    </source>
</reference>
<dbReference type="EMBL" id="AM942759">
    <property type="protein sequence ID" value="CAR46386.1"/>
    <property type="molecule type" value="Genomic_DNA"/>
</dbReference>
<dbReference type="RefSeq" id="WP_004246960.1">
    <property type="nucleotide sequence ID" value="NC_010554.1"/>
</dbReference>
<dbReference type="SMR" id="B4F1I8"/>
<dbReference type="EnsemblBacteria" id="CAR46386">
    <property type="protein sequence ID" value="CAR46386"/>
    <property type="gene ID" value="PMI3259"/>
</dbReference>
<dbReference type="GeneID" id="93396000"/>
<dbReference type="KEGG" id="pmr:PMI3259"/>
<dbReference type="eggNOG" id="COG0185">
    <property type="taxonomic scope" value="Bacteria"/>
</dbReference>
<dbReference type="HOGENOM" id="CLU_144911_0_1_6"/>
<dbReference type="Proteomes" id="UP000008319">
    <property type="component" value="Chromosome"/>
</dbReference>
<dbReference type="GO" id="GO:0005737">
    <property type="term" value="C:cytoplasm"/>
    <property type="evidence" value="ECO:0007669"/>
    <property type="project" value="UniProtKB-ARBA"/>
</dbReference>
<dbReference type="GO" id="GO:0015935">
    <property type="term" value="C:small ribosomal subunit"/>
    <property type="evidence" value="ECO:0007669"/>
    <property type="project" value="InterPro"/>
</dbReference>
<dbReference type="GO" id="GO:0019843">
    <property type="term" value="F:rRNA binding"/>
    <property type="evidence" value="ECO:0007669"/>
    <property type="project" value="UniProtKB-UniRule"/>
</dbReference>
<dbReference type="GO" id="GO:0003735">
    <property type="term" value="F:structural constituent of ribosome"/>
    <property type="evidence" value="ECO:0007669"/>
    <property type="project" value="InterPro"/>
</dbReference>
<dbReference type="GO" id="GO:0000028">
    <property type="term" value="P:ribosomal small subunit assembly"/>
    <property type="evidence" value="ECO:0007669"/>
    <property type="project" value="TreeGrafter"/>
</dbReference>
<dbReference type="GO" id="GO:0006412">
    <property type="term" value="P:translation"/>
    <property type="evidence" value="ECO:0007669"/>
    <property type="project" value="UniProtKB-UniRule"/>
</dbReference>
<dbReference type="FunFam" id="3.30.860.10:FF:000001">
    <property type="entry name" value="30S ribosomal protein S19"/>
    <property type="match status" value="1"/>
</dbReference>
<dbReference type="Gene3D" id="3.30.860.10">
    <property type="entry name" value="30s Ribosomal Protein S19, Chain A"/>
    <property type="match status" value="1"/>
</dbReference>
<dbReference type="HAMAP" id="MF_00531">
    <property type="entry name" value="Ribosomal_uS19"/>
    <property type="match status" value="1"/>
</dbReference>
<dbReference type="InterPro" id="IPR002222">
    <property type="entry name" value="Ribosomal_uS19"/>
</dbReference>
<dbReference type="InterPro" id="IPR005732">
    <property type="entry name" value="Ribosomal_uS19_bac-type"/>
</dbReference>
<dbReference type="InterPro" id="IPR020934">
    <property type="entry name" value="Ribosomal_uS19_CS"/>
</dbReference>
<dbReference type="InterPro" id="IPR023575">
    <property type="entry name" value="Ribosomal_uS19_SF"/>
</dbReference>
<dbReference type="NCBIfam" id="TIGR01050">
    <property type="entry name" value="rpsS_bact"/>
    <property type="match status" value="1"/>
</dbReference>
<dbReference type="PANTHER" id="PTHR11880">
    <property type="entry name" value="RIBOSOMAL PROTEIN S19P FAMILY MEMBER"/>
    <property type="match status" value="1"/>
</dbReference>
<dbReference type="PANTHER" id="PTHR11880:SF8">
    <property type="entry name" value="SMALL RIBOSOMAL SUBUNIT PROTEIN US19M"/>
    <property type="match status" value="1"/>
</dbReference>
<dbReference type="Pfam" id="PF00203">
    <property type="entry name" value="Ribosomal_S19"/>
    <property type="match status" value="1"/>
</dbReference>
<dbReference type="PIRSF" id="PIRSF002144">
    <property type="entry name" value="Ribosomal_S19"/>
    <property type="match status" value="1"/>
</dbReference>
<dbReference type="PRINTS" id="PR00975">
    <property type="entry name" value="RIBOSOMALS19"/>
</dbReference>
<dbReference type="SUPFAM" id="SSF54570">
    <property type="entry name" value="Ribosomal protein S19"/>
    <property type="match status" value="1"/>
</dbReference>
<dbReference type="PROSITE" id="PS00323">
    <property type="entry name" value="RIBOSOMAL_S19"/>
    <property type="match status" value="1"/>
</dbReference>
<name>RS19_PROMH</name>
<proteinExistence type="inferred from homology"/>
<protein>
    <recommendedName>
        <fullName evidence="1">Small ribosomal subunit protein uS19</fullName>
    </recommendedName>
    <alternativeName>
        <fullName evidence="2">30S ribosomal protein S19</fullName>
    </alternativeName>
</protein>
<keyword id="KW-1185">Reference proteome</keyword>
<keyword id="KW-0687">Ribonucleoprotein</keyword>
<keyword id="KW-0689">Ribosomal protein</keyword>
<keyword id="KW-0694">RNA-binding</keyword>
<keyword id="KW-0699">rRNA-binding</keyword>
<feature type="chain" id="PRO_1000128020" description="Small ribosomal subunit protein uS19">
    <location>
        <begin position="1"/>
        <end position="92"/>
    </location>
</feature>
<evidence type="ECO:0000255" key="1">
    <source>
        <dbReference type="HAMAP-Rule" id="MF_00531"/>
    </source>
</evidence>
<evidence type="ECO:0000305" key="2"/>
<accession>B4F1I8</accession>
<comment type="function">
    <text evidence="1">Protein S19 forms a complex with S13 that binds strongly to the 16S ribosomal RNA.</text>
</comment>
<comment type="similarity">
    <text evidence="1">Belongs to the universal ribosomal protein uS19 family.</text>
</comment>
<sequence length="92" mass="10390">MPRSLKKGPFIDLHLLKKVEKAVESGDKKPVKTWSRRSTIFPNMIGLTIAVHNGRQHVPVYVSDEMVGHKLGEFAPTRTYRGHAADKKAKKK</sequence>
<organism>
    <name type="scientific">Proteus mirabilis (strain HI4320)</name>
    <dbReference type="NCBI Taxonomy" id="529507"/>
    <lineage>
        <taxon>Bacteria</taxon>
        <taxon>Pseudomonadati</taxon>
        <taxon>Pseudomonadota</taxon>
        <taxon>Gammaproteobacteria</taxon>
        <taxon>Enterobacterales</taxon>
        <taxon>Morganellaceae</taxon>
        <taxon>Proteus</taxon>
    </lineage>
</organism>